<evidence type="ECO:0000250" key="1"/>
<evidence type="ECO:0000255" key="2"/>
<evidence type="ECO:0000269" key="3">
    <source>
    </source>
</evidence>
<evidence type="ECO:0000305" key="4"/>
<name>CCG5_MOUSE</name>
<keyword id="KW-1003">Cell membrane</keyword>
<keyword id="KW-0472">Membrane</keyword>
<keyword id="KW-0628">Postsynaptic cell membrane</keyword>
<keyword id="KW-1185">Reference proteome</keyword>
<keyword id="KW-0770">Synapse</keyword>
<keyword id="KW-0812">Transmembrane</keyword>
<keyword id="KW-1133">Transmembrane helix</keyword>
<reference key="1">
    <citation type="journal article" date="2001" name="Gene">
        <title>Calcium channel gamma subunits provide insights into the evolution of this gene family.</title>
        <authorList>
            <person name="Chu P.-J."/>
            <person name="Robertson H.M."/>
            <person name="Best P.M."/>
        </authorList>
    </citation>
    <scope>NUCLEOTIDE SEQUENCE [MRNA]</scope>
    <source>
        <strain>BALB/cJ</strain>
    </source>
</reference>
<reference key="2">
    <citation type="journal article" date="2008" name="Neuron">
        <title>AMPA receptor subunit-specific regulation by a distinct family of type II TARPs.</title>
        <authorList>
            <person name="Kato A.S."/>
            <person name="Siuda E.R."/>
            <person name="Nisenbaum E.S."/>
            <person name="Bredt D.S."/>
        </authorList>
    </citation>
    <scope>TISSUE SPECIFICITY</scope>
</reference>
<reference key="3">
    <citation type="journal article" date="2010" name="Cell">
        <title>A tissue-specific atlas of mouse protein phosphorylation and expression.</title>
        <authorList>
            <person name="Huttlin E.L."/>
            <person name="Jedrychowski M.P."/>
            <person name="Elias J.E."/>
            <person name="Goswami T."/>
            <person name="Rad R."/>
            <person name="Beausoleil S.A."/>
            <person name="Villen J."/>
            <person name="Haas W."/>
            <person name="Sowa M.E."/>
            <person name="Gygi S.P."/>
        </authorList>
    </citation>
    <scope>IDENTIFICATION BY MASS SPECTROMETRY [LARGE SCALE ANALYSIS]</scope>
    <source>
        <tissue>Brain</tissue>
    </source>
</reference>
<protein>
    <recommendedName>
        <fullName>Voltage-dependent calcium channel gamma-5 subunit</fullName>
    </recommendedName>
    <alternativeName>
        <fullName>Neuronal voltage-gated calcium channel gamma-5 subunit</fullName>
    </alternativeName>
    <alternativeName>
        <fullName>Transmembrane AMPAR regulatory protein gamma-5</fullName>
        <shortName>TARP gamma-5</shortName>
    </alternativeName>
</protein>
<accession>Q8VHW4</accession>
<comment type="function">
    <text evidence="1">Regulates the gating properties of AMPA-selective glutamate receptors (AMPARs). Modulates their gating properties by accelerating their rates of activation, deactivation and desensitization. Displays subunit-specific AMPA receptor regulation. Shows specificity for GRIA1, GRIA4 and the long isoform of GRIA2. Thought to stabilize the calcium channel in an inactivated (closed) state (By similarity).</text>
</comment>
<comment type="subunit">
    <text evidence="1">The L-type calcium channel is composed of five subunits: alpha-1, alpha-2/delta, beta and gamma. Acts as an auxiliary subunit for AMPA-selective glutamate receptors (AMPARs). Found in a complex with GRIA1, GRIA2, GRIA3, GRIA4, CNIH2, CNIH3, CACNG2, CACNG3, CACNG4, CACNG7 and CACNG8. Interacts with GRIA1, GRIA2, GRIA3 and GRIA4 (By similarity).</text>
</comment>
<comment type="subcellular location">
    <subcellularLocation>
        <location evidence="1">Membrane</location>
        <topology evidence="1">Multi-pass membrane protein</topology>
    </subcellularLocation>
    <subcellularLocation>
        <location evidence="1">Postsynaptic density membrane</location>
    </subcellularLocation>
</comment>
<comment type="tissue specificity">
    <text evidence="3">Brain. Enriched in Bergman glia, as well as a variety of neuronal populations including locus coeruleus, olfactory bulb, lateral septal nucleus, interpeduncular nucleus, and the CA2 and rostral/medial CA1 regions of hippocampus.</text>
</comment>
<comment type="similarity">
    <text evidence="4">Belongs to the PMP-22/EMP/MP20 family. CACNG subfamily.</text>
</comment>
<sequence>MSACGRKALTLLSSVFAVCGLGLLGIAVSTDYWLYLEEGIILPQNQSTEVKMSLHSGLWRVCFLAGEERGRCFTIEYVMPMNSQMTSESTVNVLKMIRSATPFPLVSLFFMFIGFILSNIGHIRPHRTILAFVSGIFFILSGLSLVVGLVLYISSINDEMLNRTKDAETYFNYKYGWSFAFAAISFLLTESAGVMSVYLFMKRYTAEDMYRPHPGFYRPRLSNCSDYSGQFLHPDAWIRGRSPSDISSDASLQMNSNYPALLKCPDYDQMSSSPC</sequence>
<organism>
    <name type="scientific">Mus musculus</name>
    <name type="common">Mouse</name>
    <dbReference type="NCBI Taxonomy" id="10090"/>
    <lineage>
        <taxon>Eukaryota</taxon>
        <taxon>Metazoa</taxon>
        <taxon>Chordata</taxon>
        <taxon>Craniata</taxon>
        <taxon>Vertebrata</taxon>
        <taxon>Euteleostomi</taxon>
        <taxon>Mammalia</taxon>
        <taxon>Eutheria</taxon>
        <taxon>Euarchontoglires</taxon>
        <taxon>Glires</taxon>
        <taxon>Rodentia</taxon>
        <taxon>Myomorpha</taxon>
        <taxon>Muroidea</taxon>
        <taxon>Muridae</taxon>
        <taxon>Murinae</taxon>
        <taxon>Mus</taxon>
        <taxon>Mus</taxon>
    </lineage>
</organism>
<feature type="chain" id="PRO_0000164682" description="Voltage-dependent calcium channel gamma-5 subunit">
    <location>
        <begin position="1"/>
        <end position="275"/>
    </location>
</feature>
<feature type="transmembrane region" description="Helical" evidence="2">
    <location>
        <begin position="8"/>
        <end position="28"/>
    </location>
</feature>
<feature type="transmembrane region" description="Helical" evidence="2">
    <location>
        <begin position="103"/>
        <end position="123"/>
    </location>
</feature>
<feature type="transmembrane region" description="Helical" evidence="2">
    <location>
        <begin position="129"/>
        <end position="149"/>
    </location>
</feature>
<feature type="transmembrane region" description="Helical" evidence="2">
    <location>
        <begin position="181"/>
        <end position="201"/>
    </location>
</feature>
<proteinExistence type="evidence at protein level"/>
<gene>
    <name type="primary">Cacng5</name>
</gene>
<dbReference type="EMBL" id="AF361347">
    <property type="protein sequence ID" value="AAL50042.1"/>
    <property type="molecule type" value="mRNA"/>
</dbReference>
<dbReference type="CCDS" id="CCDS25572.1"/>
<dbReference type="RefSeq" id="NP_001186230.1">
    <property type="nucleotide sequence ID" value="NM_001199301.1"/>
</dbReference>
<dbReference type="RefSeq" id="NP_542375.1">
    <property type="nucleotide sequence ID" value="NM_080644.3"/>
</dbReference>
<dbReference type="SMR" id="Q8VHW4"/>
<dbReference type="FunCoup" id="Q8VHW4">
    <property type="interactions" value="405"/>
</dbReference>
<dbReference type="STRING" id="10090.ENSMUSP00000047888"/>
<dbReference type="TCDB" id="8.A.16.2.4">
    <property type="family name" value="the ca(+) channel auxiliary subunit Gama1-Gama8 (ccaGama) family"/>
</dbReference>
<dbReference type="iPTMnet" id="Q8VHW4"/>
<dbReference type="PhosphoSitePlus" id="Q8VHW4"/>
<dbReference type="PaxDb" id="10090-ENSMUSP00000047888"/>
<dbReference type="ProteomicsDB" id="265609"/>
<dbReference type="Antibodypedia" id="31684">
    <property type="antibodies" value="109 antibodies from 31 providers"/>
</dbReference>
<dbReference type="DNASU" id="140723"/>
<dbReference type="Ensembl" id="ENSMUST00000039071.3">
    <property type="protein sequence ID" value="ENSMUSP00000047888.3"/>
    <property type="gene ID" value="ENSMUSG00000040373.13"/>
</dbReference>
<dbReference type="Ensembl" id="ENSMUST00000106742.8">
    <property type="protein sequence ID" value="ENSMUSP00000102353.2"/>
    <property type="gene ID" value="ENSMUSG00000040373.13"/>
</dbReference>
<dbReference type="GeneID" id="140723"/>
<dbReference type="KEGG" id="mmu:140723"/>
<dbReference type="UCSC" id="uc007mbb.1">
    <property type="organism name" value="mouse"/>
</dbReference>
<dbReference type="AGR" id="MGI:2157946"/>
<dbReference type="CTD" id="27091"/>
<dbReference type="MGI" id="MGI:2157946">
    <property type="gene designation" value="Cacng5"/>
</dbReference>
<dbReference type="VEuPathDB" id="HostDB:ENSMUSG00000040373"/>
<dbReference type="eggNOG" id="ENOG502QTQ7">
    <property type="taxonomic scope" value="Eukaryota"/>
</dbReference>
<dbReference type="GeneTree" id="ENSGT01050000244961"/>
<dbReference type="HOGENOM" id="CLU_053704_1_1_1"/>
<dbReference type="InParanoid" id="Q8VHW4"/>
<dbReference type="OMA" id="SESFFNY"/>
<dbReference type="OrthoDB" id="5917530at2759"/>
<dbReference type="PhylomeDB" id="Q8VHW4"/>
<dbReference type="TreeFam" id="TF327980"/>
<dbReference type="BioGRID-ORCS" id="140723">
    <property type="hits" value="3 hits in 76 CRISPR screens"/>
</dbReference>
<dbReference type="ChiTaRS" id="Cacng5">
    <property type="organism name" value="mouse"/>
</dbReference>
<dbReference type="PRO" id="PR:Q8VHW4"/>
<dbReference type="Proteomes" id="UP000000589">
    <property type="component" value="Chromosome 11"/>
</dbReference>
<dbReference type="RNAct" id="Q8VHW4">
    <property type="molecule type" value="protein"/>
</dbReference>
<dbReference type="Bgee" id="ENSMUSG00000040373">
    <property type="expression patterns" value="Expressed in rostral migratory stream and 90 other cell types or tissues"/>
</dbReference>
<dbReference type="ExpressionAtlas" id="Q8VHW4">
    <property type="expression patterns" value="baseline and differential"/>
</dbReference>
<dbReference type="GO" id="GO:0032281">
    <property type="term" value="C:AMPA glutamate receptor complex"/>
    <property type="evidence" value="ECO:0000250"/>
    <property type="project" value="UniProtKB"/>
</dbReference>
<dbReference type="GO" id="GO:0098978">
    <property type="term" value="C:glutamatergic synapse"/>
    <property type="evidence" value="ECO:0007669"/>
    <property type="project" value="Ensembl"/>
</dbReference>
<dbReference type="GO" id="GO:0014069">
    <property type="term" value="C:postsynaptic density"/>
    <property type="evidence" value="ECO:0000250"/>
    <property type="project" value="UniProtKB"/>
</dbReference>
<dbReference type="GO" id="GO:0098839">
    <property type="term" value="C:postsynaptic density membrane"/>
    <property type="evidence" value="ECO:0007669"/>
    <property type="project" value="UniProtKB-SubCell"/>
</dbReference>
<dbReference type="GO" id="GO:0006816">
    <property type="term" value="P:calcium ion transport"/>
    <property type="evidence" value="ECO:0007669"/>
    <property type="project" value="InterPro"/>
</dbReference>
<dbReference type="GO" id="GO:2000311">
    <property type="term" value="P:regulation of AMPA receptor activity"/>
    <property type="evidence" value="ECO:0000250"/>
    <property type="project" value="UniProtKB"/>
</dbReference>
<dbReference type="FunFam" id="1.20.140.150:FF:000003">
    <property type="entry name" value="Voltage-dependent calcium channel gamma-7 subunit"/>
    <property type="match status" value="1"/>
</dbReference>
<dbReference type="Gene3D" id="1.20.140.150">
    <property type="match status" value="1"/>
</dbReference>
<dbReference type="InterPro" id="IPR051072">
    <property type="entry name" value="CACNG_subunit"/>
</dbReference>
<dbReference type="InterPro" id="IPR004031">
    <property type="entry name" value="PMP22/EMP/MP20/Claudin"/>
</dbReference>
<dbReference type="InterPro" id="IPR008369">
    <property type="entry name" value="VDCC_g5su"/>
</dbReference>
<dbReference type="InterPro" id="IPR008368">
    <property type="entry name" value="VDCC_gsu"/>
</dbReference>
<dbReference type="PANTHER" id="PTHR12107">
    <property type="entry name" value="VOLTAGE-DEPENDENT CALCIUM CHANNEL GAMMA SUBUNIT"/>
    <property type="match status" value="1"/>
</dbReference>
<dbReference type="PANTHER" id="PTHR12107:SF4">
    <property type="entry name" value="VOLTAGE-DEPENDENT CALCIUM CHANNEL GAMMA-5 SUBUNIT"/>
    <property type="match status" value="1"/>
</dbReference>
<dbReference type="Pfam" id="PF13903">
    <property type="entry name" value="Claudin_2"/>
    <property type="match status" value="1"/>
</dbReference>
<dbReference type="PRINTS" id="PR01792">
    <property type="entry name" value="VDCCGAMMA"/>
</dbReference>
<dbReference type="PRINTS" id="PR01793">
    <property type="entry name" value="VDCCGAMMA5"/>
</dbReference>